<organism>
    <name type="scientific">Methanosarcina mazei (strain ATCC BAA-159 / DSM 3647 / Goe1 / Go1 / JCM 11833 / OCM 88)</name>
    <name type="common">Methanosarcina frisia</name>
    <dbReference type="NCBI Taxonomy" id="192952"/>
    <lineage>
        <taxon>Archaea</taxon>
        <taxon>Methanobacteriati</taxon>
        <taxon>Methanobacteriota</taxon>
        <taxon>Stenosarchaea group</taxon>
        <taxon>Methanomicrobia</taxon>
        <taxon>Methanosarcinales</taxon>
        <taxon>Methanosarcinaceae</taxon>
        <taxon>Methanosarcina</taxon>
    </lineage>
</organism>
<comment type="function">
    <text evidence="1">Is involved in the reduction of 2,3-digeranylgeranylglycerophospholipids (unsaturated archaeols) into 2,3-diphytanylglycerophospholipids (saturated archaeols) in the biosynthesis of archaeal membrane lipids. Catalyzes the formation of archaetidic acid (2,3-di-O-phytanyl-sn-glyceryl phosphate) from 2,3-di-O-geranylgeranylglyceryl phosphate (DGGGP) via the hydrogenation of each double bond of the isoprenoid chains. Is also probably able to reduce double bonds of geranyl groups in CDP-2,3-bis-O-(geranylgeranyl)-sn-glycerol and archaetidylserine, thus acting at various stages in the biosynthesis of archaeal membrane lipids.</text>
</comment>
<comment type="catalytic activity">
    <reaction evidence="1">
        <text>a 2,3-bis-O-phytanyl-sn-glycerol 1-phospholipid + 8 oxidized 2[4Fe-4S]-[ferredoxin] = a 2,3-bis-O-(geranylgeranyl)-sn-glycerol 1-phospholipid + 8 reduced 2[4Fe-4S]-[ferredoxin] + 16 H(+)</text>
        <dbReference type="Rhea" id="RHEA:54324"/>
        <dbReference type="Rhea" id="RHEA-COMP:10002"/>
        <dbReference type="Rhea" id="RHEA-COMP:10004"/>
        <dbReference type="ChEBI" id="CHEBI:15378"/>
        <dbReference type="ChEBI" id="CHEBI:33722"/>
        <dbReference type="ChEBI" id="CHEBI:33723"/>
        <dbReference type="ChEBI" id="CHEBI:138139"/>
        <dbReference type="ChEBI" id="CHEBI:138140"/>
        <dbReference type="EC" id="1.3.7.11"/>
    </reaction>
    <physiologicalReaction direction="right-to-left" evidence="1">
        <dbReference type="Rhea" id="RHEA:54326"/>
    </physiologicalReaction>
</comment>
<comment type="catalytic activity">
    <reaction evidence="1">
        <text>2,3-bis-O-(phytanyl)-sn-glycerol 1-phosphate + 8 oxidized 2[4Fe-4S]-[ferredoxin] = 2,3-bis-O-(geranylgeranyl)-sn-glycerol 1-phosphate + 8 reduced 2[4Fe-4S]-[ferredoxin] + 16 H(+)</text>
        <dbReference type="Rhea" id="RHEA:36159"/>
        <dbReference type="Rhea" id="RHEA-COMP:10002"/>
        <dbReference type="Rhea" id="RHEA-COMP:10004"/>
        <dbReference type="ChEBI" id="CHEBI:15378"/>
        <dbReference type="ChEBI" id="CHEBI:33722"/>
        <dbReference type="ChEBI" id="CHEBI:33723"/>
        <dbReference type="ChEBI" id="CHEBI:58837"/>
        <dbReference type="ChEBI" id="CHEBI:73125"/>
        <dbReference type="EC" id="1.3.7.11"/>
    </reaction>
    <physiologicalReaction direction="right-to-left" evidence="1">
        <dbReference type="Rhea" id="RHEA:36161"/>
    </physiologicalReaction>
</comment>
<comment type="catalytic activity">
    <reaction evidence="1">
        <text>a 2,3-bis-O-phytanyl-sn-glycerol 1-phospholipid + 8 A = a 2,3-bis-O-(geranylgeranyl)-sn-glycerol 1-phospholipid + 8 AH2</text>
        <dbReference type="Rhea" id="RHEA:64376"/>
        <dbReference type="ChEBI" id="CHEBI:13193"/>
        <dbReference type="ChEBI" id="CHEBI:17499"/>
        <dbReference type="ChEBI" id="CHEBI:138139"/>
        <dbReference type="ChEBI" id="CHEBI:138140"/>
    </reaction>
    <physiologicalReaction direction="right-to-left" evidence="1">
        <dbReference type="Rhea" id="RHEA:64378"/>
    </physiologicalReaction>
</comment>
<comment type="catalytic activity">
    <reaction evidence="1">
        <text>CDP-2,3-bis-O-(geranylgeranyl)-sn-glycerol + 8 AH2 = CDP-2,3-bis-O-(phytanyl)-sn-glycerol + 8 A</text>
        <dbReference type="Rhea" id="RHEA:84207"/>
        <dbReference type="ChEBI" id="CHEBI:13193"/>
        <dbReference type="ChEBI" id="CHEBI:17499"/>
        <dbReference type="ChEBI" id="CHEBI:58838"/>
        <dbReference type="ChEBI" id="CHEBI:74004"/>
    </reaction>
    <physiologicalReaction direction="left-to-right" evidence="1">
        <dbReference type="Rhea" id="RHEA:84208"/>
    </physiologicalReaction>
</comment>
<comment type="catalytic activity">
    <reaction evidence="1">
        <text>archaetidylserine + 8 AH2 = 2,3-bis-O-phytanyl-sn-glycero-3-phospho-L-serine + 8 A</text>
        <dbReference type="Rhea" id="RHEA:84215"/>
        <dbReference type="ChEBI" id="CHEBI:13193"/>
        <dbReference type="ChEBI" id="CHEBI:17499"/>
        <dbReference type="ChEBI" id="CHEBI:71517"/>
        <dbReference type="ChEBI" id="CHEBI:74853"/>
    </reaction>
    <physiologicalReaction direction="left-to-right" evidence="1">
        <dbReference type="Rhea" id="RHEA:84216"/>
    </physiologicalReaction>
</comment>
<comment type="cofactor">
    <cofactor evidence="1">
        <name>FAD</name>
        <dbReference type="ChEBI" id="CHEBI:57692"/>
    </cofactor>
    <text evidence="1">Binds 1 FAD per subunit.</text>
</comment>
<comment type="pathway">
    <text evidence="1">Membrane lipid metabolism; glycerophospholipid metabolism.</text>
</comment>
<comment type="miscellaneous">
    <text evidence="1">Reduction reaction proceeds via syn addition of hydrogen for double bonds.</text>
</comment>
<comment type="similarity">
    <text evidence="1">Belongs to the geranylgeranyl reductase family. DGGGPL reductase subfamily.</text>
</comment>
<comment type="sequence caution" evidence="2">
    <conflict type="erroneous initiation">
        <sequence resource="EMBL-CDS" id="AAM32195"/>
    </conflict>
    <text>Extended N-terminus.</text>
</comment>
<dbReference type="EC" id="1.3.7.11" evidence="1"/>
<dbReference type="EMBL" id="AE008384">
    <property type="protein sequence ID" value="AAM32195.1"/>
    <property type="status" value="ALT_INIT"/>
    <property type="molecule type" value="Genomic_DNA"/>
</dbReference>
<dbReference type="RefSeq" id="WP_015412585.1">
    <property type="nucleotide sequence ID" value="NC_003901.1"/>
</dbReference>
<dbReference type="SMR" id="Q8PU50"/>
<dbReference type="DNASU" id="1480841"/>
<dbReference type="KEGG" id="mma:MM_2499"/>
<dbReference type="PATRIC" id="fig|192952.21.peg.2861"/>
<dbReference type="eggNOG" id="arCOG00570">
    <property type="taxonomic scope" value="Archaea"/>
</dbReference>
<dbReference type="HOGENOM" id="CLU_024648_0_0_2"/>
<dbReference type="UniPathway" id="UPA00940"/>
<dbReference type="Proteomes" id="UP000000595">
    <property type="component" value="Chromosome"/>
</dbReference>
<dbReference type="GO" id="GO:0016020">
    <property type="term" value="C:membrane"/>
    <property type="evidence" value="ECO:0007669"/>
    <property type="project" value="GOC"/>
</dbReference>
<dbReference type="GO" id="GO:0050660">
    <property type="term" value="F:flavin adenine dinucleotide binding"/>
    <property type="evidence" value="ECO:0007669"/>
    <property type="project" value="UniProtKB-UniRule"/>
</dbReference>
<dbReference type="GO" id="GO:0045550">
    <property type="term" value="F:geranylgeranyl reductase activity"/>
    <property type="evidence" value="ECO:0007669"/>
    <property type="project" value="InterPro"/>
</dbReference>
<dbReference type="GO" id="GO:0016636">
    <property type="term" value="F:oxidoreductase activity, acting on the CH-CH group of donors, iron-sulfur protein as acceptor"/>
    <property type="evidence" value="ECO:0007669"/>
    <property type="project" value="UniProtKB-UniRule"/>
</dbReference>
<dbReference type="GO" id="GO:0016628">
    <property type="term" value="F:oxidoreductase activity, acting on the CH-CH group of donors, NAD or NADP as acceptor"/>
    <property type="evidence" value="ECO:0007669"/>
    <property type="project" value="InterPro"/>
</dbReference>
<dbReference type="GO" id="GO:0046474">
    <property type="term" value="P:glycerophospholipid biosynthetic process"/>
    <property type="evidence" value="ECO:0007669"/>
    <property type="project" value="UniProtKB-UniRule"/>
</dbReference>
<dbReference type="GO" id="GO:0046467">
    <property type="term" value="P:membrane lipid biosynthetic process"/>
    <property type="evidence" value="ECO:0007669"/>
    <property type="project" value="InterPro"/>
</dbReference>
<dbReference type="Gene3D" id="3.30.9.10">
    <property type="entry name" value="D-Amino Acid Oxidase, subunit A, domain 2"/>
    <property type="match status" value="1"/>
</dbReference>
<dbReference type="Gene3D" id="3.50.50.60">
    <property type="entry name" value="FAD/NAD(P)-binding domain"/>
    <property type="match status" value="1"/>
</dbReference>
<dbReference type="HAMAP" id="MF_01287">
    <property type="entry name" value="DGGGPL_reductase"/>
    <property type="match status" value="1"/>
</dbReference>
<dbReference type="InterPro" id="IPR023590">
    <property type="entry name" value="DGGGPL_reductase"/>
</dbReference>
<dbReference type="InterPro" id="IPR036188">
    <property type="entry name" value="FAD/NAD-bd_sf"/>
</dbReference>
<dbReference type="InterPro" id="IPR011777">
    <property type="entry name" value="Geranylgeranyl_Rdtase_fam"/>
</dbReference>
<dbReference type="InterPro" id="IPR050407">
    <property type="entry name" value="Geranylgeranyl_reductase"/>
</dbReference>
<dbReference type="InterPro" id="IPR054715">
    <property type="entry name" value="GGR_cat"/>
</dbReference>
<dbReference type="NCBIfam" id="TIGR02032">
    <property type="entry name" value="GG-red-SF"/>
    <property type="match status" value="1"/>
</dbReference>
<dbReference type="PANTHER" id="PTHR42685:SF18">
    <property type="entry name" value="DIGERANYLGERANYLGLYCEROPHOSPHOLIPID REDUCTASE"/>
    <property type="match status" value="1"/>
</dbReference>
<dbReference type="PANTHER" id="PTHR42685">
    <property type="entry name" value="GERANYLGERANYL DIPHOSPHATE REDUCTASE"/>
    <property type="match status" value="1"/>
</dbReference>
<dbReference type="Pfam" id="PF12831">
    <property type="entry name" value="FAD_oxidored"/>
    <property type="match status" value="1"/>
</dbReference>
<dbReference type="Pfam" id="PF22578">
    <property type="entry name" value="GGR_cat"/>
    <property type="match status" value="1"/>
</dbReference>
<dbReference type="PRINTS" id="PR00420">
    <property type="entry name" value="RNGMNOXGNASE"/>
</dbReference>
<dbReference type="SUPFAM" id="SSF51905">
    <property type="entry name" value="FAD/NAD(P)-binding domain"/>
    <property type="match status" value="1"/>
</dbReference>
<gene>
    <name type="ordered locus">MM_2499</name>
</gene>
<reference key="1">
    <citation type="journal article" date="2002" name="J. Mol. Microbiol. Biotechnol.">
        <title>The genome of Methanosarcina mazei: evidence for lateral gene transfer between Bacteria and Archaea.</title>
        <authorList>
            <person name="Deppenmeier U."/>
            <person name="Johann A."/>
            <person name="Hartsch T."/>
            <person name="Merkl R."/>
            <person name="Schmitz R.A."/>
            <person name="Martinez-Arias R."/>
            <person name="Henne A."/>
            <person name="Wiezer A."/>
            <person name="Baeumer S."/>
            <person name="Jacobi C."/>
            <person name="Brueggemann H."/>
            <person name="Lienard T."/>
            <person name="Christmann A."/>
            <person name="Boemecke M."/>
            <person name="Steckel S."/>
            <person name="Bhattacharyya A."/>
            <person name="Lykidis A."/>
            <person name="Overbeek R."/>
            <person name="Klenk H.-P."/>
            <person name="Gunsalus R.P."/>
            <person name="Fritz H.-J."/>
            <person name="Gottschalk G."/>
        </authorList>
    </citation>
    <scope>NUCLEOTIDE SEQUENCE [LARGE SCALE GENOMIC DNA]</scope>
    <source>
        <strain>ATCC BAA-159 / DSM 3647 / Goe1 / Go1 / JCM 11833 / OCM 88</strain>
    </source>
</reference>
<accession>Q8PU50</accession>
<name>GGR_METMA</name>
<keyword id="KW-0274">FAD</keyword>
<keyword id="KW-0285">Flavoprotein</keyword>
<keyword id="KW-0444">Lipid biosynthesis</keyword>
<keyword id="KW-0443">Lipid metabolism</keyword>
<keyword id="KW-0560">Oxidoreductase</keyword>
<keyword id="KW-0594">Phospholipid biosynthesis</keyword>
<keyword id="KW-1208">Phospholipid metabolism</keyword>
<feature type="chain" id="PRO_0000351464" description="Digeranylgeranylglycerophospholipid reductase">
    <location>
        <begin position="1"/>
        <end position="407"/>
    </location>
</feature>
<feature type="binding site" evidence="1">
    <location>
        <position position="15"/>
    </location>
    <ligand>
        <name>FAD</name>
        <dbReference type="ChEBI" id="CHEBI:57692"/>
    </ligand>
</feature>
<feature type="binding site" evidence="1">
    <location>
        <position position="34"/>
    </location>
    <ligand>
        <name>FAD</name>
        <dbReference type="ChEBI" id="CHEBI:57692"/>
    </ligand>
</feature>
<feature type="binding site" evidence="1">
    <location>
        <position position="45"/>
    </location>
    <ligand>
        <name>FAD</name>
        <dbReference type="ChEBI" id="CHEBI:57692"/>
    </ligand>
</feature>
<feature type="binding site" evidence="1">
    <location>
        <position position="46"/>
    </location>
    <ligand>
        <name>FAD</name>
        <dbReference type="ChEBI" id="CHEBI:57692"/>
    </ligand>
</feature>
<feature type="binding site" evidence="1">
    <location>
        <position position="48"/>
    </location>
    <ligand>
        <name>FAD</name>
        <dbReference type="ChEBI" id="CHEBI:57692"/>
    </ligand>
</feature>
<feature type="binding site" evidence="1">
    <location>
        <position position="99"/>
    </location>
    <ligand>
        <name>FAD</name>
        <dbReference type="ChEBI" id="CHEBI:57692"/>
    </ligand>
</feature>
<feature type="binding site" evidence="1">
    <location>
        <position position="123"/>
    </location>
    <ligand>
        <name>FAD</name>
        <dbReference type="ChEBI" id="CHEBI:57692"/>
    </ligand>
</feature>
<feature type="binding site" evidence="1">
    <location>
        <position position="281"/>
    </location>
    <ligand>
        <name>FAD</name>
        <dbReference type="ChEBI" id="CHEBI:57692"/>
    </ligand>
</feature>
<feature type="binding site" evidence="1">
    <location>
        <position position="293"/>
    </location>
    <ligand>
        <name>FAD</name>
        <dbReference type="ChEBI" id="CHEBI:57692"/>
    </ligand>
</feature>
<feature type="binding site" evidence="1">
    <location>
        <position position="294"/>
    </location>
    <ligand>
        <name>FAD</name>
        <dbReference type="ChEBI" id="CHEBI:57692"/>
    </ligand>
</feature>
<sequence length="407" mass="44147">MKDKYDVLVIGAGPAGSIAAKTAAEKGLDVLLIEKRQEIGDPVRCAEGVNKECLKKHVEIDKRWICADLKGSCIFSPDGTKIEMAEEISGGEVGYVLERKVFDRALAEHAATAGAEVRVKTRATGLIIEDDFVKGARLMHLGKEYEVRASIVIGADGVESKVGRWAGIDTALKPVDVETCAQYLIAGADINQEYCEFYIGNEMAPGGYVWVFPKGGGKANVGIGILGSKMGKFKPRPVDYLNDFVQKKFPDARIVEMVFGGVPVSGSIEKTSVNGLMLVGDAARQSDPITGGGILNAMDAGKLAGEAAYEAISAGDVSVVKLEEVYEKKWRDTVGHDIDMSLIVKNCFINLTDDDLDSLAHSLKDVKFERMSLLDLLQALFKANKKLLWDLRVLFKDAAKEVIKNKT</sequence>
<proteinExistence type="inferred from homology"/>
<evidence type="ECO:0000255" key="1">
    <source>
        <dbReference type="HAMAP-Rule" id="MF_01287"/>
    </source>
</evidence>
<evidence type="ECO:0000305" key="2"/>
<protein>
    <recommendedName>
        <fullName evidence="1">Digeranylgeranylglycerophospholipid reductase</fullName>
        <shortName evidence="1">DGGGPL reductase</shortName>
        <ecNumber evidence="1">1.3.7.11</ecNumber>
    </recommendedName>
    <alternativeName>
        <fullName evidence="1">2,3-bis-O-geranylgeranylglyceryl phosphate reductase</fullName>
    </alternativeName>
    <alternativeName>
        <fullName evidence="1">Geranylgeranyl reductase</fullName>
        <shortName evidence="1">GGR</shortName>
    </alternativeName>
</protein>